<protein>
    <recommendedName>
        <fullName evidence="1">Small ribosomal subunit protein bS16</fullName>
    </recommendedName>
    <alternativeName>
        <fullName evidence="2">30S ribosomal protein S16</fullName>
    </alternativeName>
</protein>
<sequence>MIKLRLKRFGKKREASFRLVACNSTSRRDGRPLQELGFYNPRTKETRLDTEALRLRLSQGAQPTDAVRSLLEKGGLIEKTVRPAEVVGKAKQAEARKAAAKNVAKQAAEAKAEETPADNTEA</sequence>
<name>RS16_PROMM</name>
<dbReference type="EMBL" id="BX548175">
    <property type="protein sequence ID" value="CAE20525.1"/>
    <property type="molecule type" value="Genomic_DNA"/>
</dbReference>
<dbReference type="RefSeq" id="WP_011129729.1">
    <property type="nucleotide sequence ID" value="NC_005071.1"/>
</dbReference>
<dbReference type="SMR" id="Q7TV43"/>
<dbReference type="KEGG" id="pmt:PMT_0350"/>
<dbReference type="eggNOG" id="COG0228">
    <property type="taxonomic scope" value="Bacteria"/>
</dbReference>
<dbReference type="HOGENOM" id="CLU_100590_3_2_3"/>
<dbReference type="OrthoDB" id="9807878at2"/>
<dbReference type="Proteomes" id="UP000001423">
    <property type="component" value="Chromosome"/>
</dbReference>
<dbReference type="GO" id="GO:0005737">
    <property type="term" value="C:cytoplasm"/>
    <property type="evidence" value="ECO:0007669"/>
    <property type="project" value="UniProtKB-ARBA"/>
</dbReference>
<dbReference type="GO" id="GO:0015935">
    <property type="term" value="C:small ribosomal subunit"/>
    <property type="evidence" value="ECO:0007669"/>
    <property type="project" value="TreeGrafter"/>
</dbReference>
<dbReference type="GO" id="GO:0003735">
    <property type="term" value="F:structural constituent of ribosome"/>
    <property type="evidence" value="ECO:0007669"/>
    <property type="project" value="InterPro"/>
</dbReference>
<dbReference type="GO" id="GO:0006412">
    <property type="term" value="P:translation"/>
    <property type="evidence" value="ECO:0007669"/>
    <property type="project" value="UniProtKB-UniRule"/>
</dbReference>
<dbReference type="Gene3D" id="3.30.1320.10">
    <property type="match status" value="1"/>
</dbReference>
<dbReference type="HAMAP" id="MF_00385">
    <property type="entry name" value="Ribosomal_bS16"/>
    <property type="match status" value="1"/>
</dbReference>
<dbReference type="InterPro" id="IPR000307">
    <property type="entry name" value="Ribosomal_bS16"/>
</dbReference>
<dbReference type="InterPro" id="IPR020592">
    <property type="entry name" value="Ribosomal_bS16_CS"/>
</dbReference>
<dbReference type="InterPro" id="IPR023803">
    <property type="entry name" value="Ribosomal_bS16_dom_sf"/>
</dbReference>
<dbReference type="NCBIfam" id="TIGR00002">
    <property type="entry name" value="S16"/>
    <property type="match status" value="1"/>
</dbReference>
<dbReference type="PANTHER" id="PTHR12919">
    <property type="entry name" value="30S RIBOSOMAL PROTEIN S16"/>
    <property type="match status" value="1"/>
</dbReference>
<dbReference type="PANTHER" id="PTHR12919:SF20">
    <property type="entry name" value="SMALL RIBOSOMAL SUBUNIT PROTEIN BS16M"/>
    <property type="match status" value="1"/>
</dbReference>
<dbReference type="Pfam" id="PF00886">
    <property type="entry name" value="Ribosomal_S16"/>
    <property type="match status" value="1"/>
</dbReference>
<dbReference type="SUPFAM" id="SSF54565">
    <property type="entry name" value="Ribosomal protein S16"/>
    <property type="match status" value="1"/>
</dbReference>
<dbReference type="PROSITE" id="PS00732">
    <property type="entry name" value="RIBOSOMAL_S16"/>
    <property type="match status" value="1"/>
</dbReference>
<keyword id="KW-1185">Reference proteome</keyword>
<keyword id="KW-0687">Ribonucleoprotein</keyword>
<keyword id="KW-0689">Ribosomal protein</keyword>
<reference key="1">
    <citation type="journal article" date="2003" name="Nature">
        <title>Genome divergence in two Prochlorococcus ecotypes reflects oceanic niche differentiation.</title>
        <authorList>
            <person name="Rocap G."/>
            <person name="Larimer F.W."/>
            <person name="Lamerdin J.E."/>
            <person name="Malfatti S."/>
            <person name="Chain P."/>
            <person name="Ahlgren N.A."/>
            <person name="Arellano A."/>
            <person name="Coleman M."/>
            <person name="Hauser L."/>
            <person name="Hess W.R."/>
            <person name="Johnson Z.I."/>
            <person name="Land M.L."/>
            <person name="Lindell D."/>
            <person name="Post A.F."/>
            <person name="Regala W."/>
            <person name="Shah M."/>
            <person name="Shaw S.L."/>
            <person name="Steglich C."/>
            <person name="Sullivan M.B."/>
            <person name="Ting C.S."/>
            <person name="Tolonen A."/>
            <person name="Webb E.A."/>
            <person name="Zinser E.R."/>
            <person name="Chisholm S.W."/>
        </authorList>
    </citation>
    <scope>NUCLEOTIDE SEQUENCE [LARGE SCALE GENOMIC DNA]</scope>
    <source>
        <strain>MIT 9313</strain>
    </source>
</reference>
<organism>
    <name type="scientific">Prochlorococcus marinus (strain MIT 9313)</name>
    <dbReference type="NCBI Taxonomy" id="74547"/>
    <lineage>
        <taxon>Bacteria</taxon>
        <taxon>Bacillati</taxon>
        <taxon>Cyanobacteriota</taxon>
        <taxon>Cyanophyceae</taxon>
        <taxon>Synechococcales</taxon>
        <taxon>Prochlorococcaceae</taxon>
        <taxon>Prochlorococcus</taxon>
    </lineage>
</organism>
<proteinExistence type="inferred from homology"/>
<accession>Q7TV43</accession>
<feature type="chain" id="PRO_0000167224" description="Small ribosomal subunit protein bS16">
    <location>
        <begin position="1"/>
        <end position="122"/>
    </location>
</feature>
<comment type="similarity">
    <text evidence="1">Belongs to the bacterial ribosomal protein bS16 family.</text>
</comment>
<evidence type="ECO:0000255" key="1">
    <source>
        <dbReference type="HAMAP-Rule" id="MF_00385"/>
    </source>
</evidence>
<evidence type="ECO:0000305" key="2"/>
<gene>
    <name evidence="1" type="primary">rpsP</name>
    <name evidence="1" type="synonym">rps16</name>
    <name type="ordered locus">PMT_0350</name>
</gene>